<evidence type="ECO:0000250" key="1"/>
<evidence type="ECO:0000250" key="2">
    <source>
        <dbReference type="UniProtKB" id="Q94BT0"/>
    </source>
</evidence>
<evidence type="ECO:0000256" key="3">
    <source>
        <dbReference type="SAM" id="MobiDB-lite"/>
    </source>
</evidence>
<evidence type="ECO:0000269" key="4">
    <source>
    </source>
</evidence>
<evidence type="ECO:0000269" key="5">
    <source>
    </source>
</evidence>
<evidence type="ECO:0000305" key="6"/>
<sequence length="1047" mass="116966">MVGNDWVNSYLEAILAAEPGIANSKPPGTGDSKSSLLLRERGHFSPTRYFVEEVITGFDETDLHRSWVQAAATRSPQERNTRLENLCWRIWNLARQKKQVEGKNAKREAKREREREKARREVTAEMSEDFSEGEKADLPGEIPTPSDNNTKGRMSRISSVDVFENWFAQHKEKKLYIVLISLHGLIRGENMELGRDSDTGGQVKYVVELARALGSMPGVYRVDLLTRQVTAPDVDSSYSEPSEMLNPIDTDIEQENGESSGAYIIRIPFGPKDKYVPKELLWPHIPEFVDRALSHIMQISKVLGEQIGGGQQVWPVSIHGHYADAGDSTALLSGALNVPMVFTGHSLGRDKLEQLLKQGRPKEEINSNYKIWRRIEAEELCLDASEIVITSTRQEVDEQWRLYDGFDPVLERKLRARMKRGVSCLGRFMPRMVVIPPGMEFHHIVPHDVDADGDDENPQTADPPIWSEIMRFFSNPRKPMILALARPDPKKNLVTLVKAFGECRPLRELANLTLIMGNRNDIDELSSTNSSVLLSILKLIDKYDLYGQVAMPKHHQQSDVPEIYRLAAKTKGVFINPAFIEPFGLTLIEAGAHGLPTVATINGGPVDIHRVLDNGLLVDPHDQQAIADALLKLVSDRQLWGRCRQNGLNNIHLFSWPEHCKTYLARIASCKQRHPKWQRVEFENSDSDSPSDSLRDINDISLNLKLSLDGEKSGSNNGVDTNLDAEDRAAERKAEVEKAVSTLAQKSKPTEKFDSKMPTLKRRKNIFVISVDCSATSDLLAVVKTVIDAAGRGSSTGFILSTSMTISETHTALLSGGLKPQDFDAVICSSGSELYFTSSGSEDKTALPYTLDADYHSHIEFRWGGESLRKTLIRWISSVEEKKKTKKGEILVEDESSSTNYCLSFKVKDPALMPPMKELRKLMRNQALRCNAVYCQNGARLNVIPVLASRSQALRYLLVRWGIDLSNMVVFVGDSGDTDYEGLLGGIHKTVILKGLASDLREQPGNRSYPMEDVTPLNSPNITEAKECGRDAIKVALEKLGISLLKP</sequence>
<feature type="chain" id="PRO_0000413638" description="Probable sucrose-phosphate synthase 2">
    <location>
        <begin position="1"/>
        <end position="1047"/>
    </location>
</feature>
<feature type="region of interest" description="Disordered" evidence="3">
    <location>
        <begin position="101"/>
        <end position="153"/>
    </location>
</feature>
<feature type="region of interest" description="Disordered" evidence="3">
    <location>
        <begin position="712"/>
        <end position="731"/>
    </location>
</feature>
<feature type="compositionally biased region" description="Basic and acidic residues" evidence="3">
    <location>
        <begin position="101"/>
        <end position="123"/>
    </location>
</feature>
<feature type="modified residue" description="Phosphoserine" evidence="2">
    <location>
        <position position="127"/>
    </location>
</feature>
<feature type="modified residue" description="Phosphoserine" evidence="2">
    <location>
        <position position="131"/>
    </location>
</feature>
<feature type="modified residue" description="Phosphoserine" evidence="2">
    <location>
        <position position="159"/>
    </location>
</feature>
<feature type="mutagenesis site" description="In kns2-1; pollen grain with collapsed exine structure." evidence="4">
    <original>P</original>
    <variation>L</variation>
    <location>
        <position position="596"/>
    </location>
</feature>
<reference key="1">
    <citation type="journal article" date="2000" name="Nature">
        <title>Sequence and analysis of chromosome 5 of the plant Arabidopsis thaliana.</title>
        <authorList>
            <person name="Tabata S."/>
            <person name="Kaneko T."/>
            <person name="Nakamura Y."/>
            <person name="Kotani H."/>
            <person name="Kato T."/>
            <person name="Asamizu E."/>
            <person name="Miyajima N."/>
            <person name="Sasamoto S."/>
            <person name="Kimura T."/>
            <person name="Hosouchi T."/>
            <person name="Kawashima K."/>
            <person name="Kohara M."/>
            <person name="Matsumoto M."/>
            <person name="Matsuno A."/>
            <person name="Muraki A."/>
            <person name="Nakayama S."/>
            <person name="Nakazaki N."/>
            <person name="Naruo K."/>
            <person name="Okumura S."/>
            <person name="Shinpo S."/>
            <person name="Takeuchi C."/>
            <person name="Wada T."/>
            <person name="Watanabe A."/>
            <person name="Yamada M."/>
            <person name="Yasuda M."/>
            <person name="Sato S."/>
            <person name="de la Bastide M."/>
            <person name="Huang E."/>
            <person name="Spiegel L."/>
            <person name="Gnoj L."/>
            <person name="O'Shaughnessy A."/>
            <person name="Preston R."/>
            <person name="Habermann K."/>
            <person name="Murray J."/>
            <person name="Johnson D."/>
            <person name="Rohlfing T."/>
            <person name="Nelson J."/>
            <person name="Stoneking T."/>
            <person name="Pepin K."/>
            <person name="Spieth J."/>
            <person name="Sekhon M."/>
            <person name="Armstrong J."/>
            <person name="Becker M."/>
            <person name="Belter E."/>
            <person name="Cordum H."/>
            <person name="Cordes M."/>
            <person name="Courtney L."/>
            <person name="Courtney W."/>
            <person name="Dante M."/>
            <person name="Du H."/>
            <person name="Edwards J."/>
            <person name="Fryman J."/>
            <person name="Haakensen B."/>
            <person name="Lamar E."/>
            <person name="Latreille P."/>
            <person name="Leonard S."/>
            <person name="Meyer R."/>
            <person name="Mulvaney E."/>
            <person name="Ozersky P."/>
            <person name="Riley A."/>
            <person name="Strowmatt C."/>
            <person name="Wagner-McPherson C."/>
            <person name="Wollam A."/>
            <person name="Yoakum M."/>
            <person name="Bell M."/>
            <person name="Dedhia N."/>
            <person name="Parnell L."/>
            <person name="Shah R."/>
            <person name="Rodriguez M."/>
            <person name="Hoon See L."/>
            <person name="Vil D."/>
            <person name="Baker J."/>
            <person name="Kirchoff K."/>
            <person name="Toth K."/>
            <person name="King L."/>
            <person name="Bahret A."/>
            <person name="Miller B."/>
            <person name="Marra M.A."/>
            <person name="Martienssen R."/>
            <person name="McCombie W.R."/>
            <person name="Wilson R.K."/>
            <person name="Murphy G."/>
            <person name="Bancroft I."/>
            <person name="Volckaert G."/>
            <person name="Wambutt R."/>
            <person name="Duesterhoeft A."/>
            <person name="Stiekema W."/>
            <person name="Pohl T."/>
            <person name="Entian K.-D."/>
            <person name="Terryn N."/>
            <person name="Hartley N."/>
            <person name="Bent E."/>
            <person name="Johnson S."/>
            <person name="Langham S.-A."/>
            <person name="McCullagh B."/>
            <person name="Robben J."/>
            <person name="Grymonprez B."/>
            <person name="Zimmermann W."/>
            <person name="Ramsperger U."/>
            <person name="Wedler H."/>
            <person name="Balke K."/>
            <person name="Wedler E."/>
            <person name="Peters S."/>
            <person name="van Staveren M."/>
            <person name="Dirkse W."/>
            <person name="Mooijman P."/>
            <person name="Klein Lankhorst R."/>
            <person name="Weitzenegger T."/>
            <person name="Bothe G."/>
            <person name="Rose M."/>
            <person name="Hauf J."/>
            <person name="Berneiser S."/>
            <person name="Hempel S."/>
            <person name="Feldpausch M."/>
            <person name="Lamberth S."/>
            <person name="Villarroel R."/>
            <person name="Gielen J."/>
            <person name="Ardiles W."/>
            <person name="Bents O."/>
            <person name="Lemcke K."/>
            <person name="Kolesov G."/>
            <person name="Mayer K.F.X."/>
            <person name="Rudd S."/>
            <person name="Schoof H."/>
            <person name="Schueller C."/>
            <person name="Zaccaria P."/>
            <person name="Mewes H.-W."/>
            <person name="Bevan M."/>
            <person name="Fransz P.F."/>
        </authorList>
    </citation>
    <scope>NUCLEOTIDE SEQUENCE [LARGE SCALE GENOMIC DNA]</scope>
    <source>
        <strain>cv. Columbia</strain>
    </source>
</reference>
<reference key="2">
    <citation type="journal article" date="2017" name="Plant J.">
        <title>Araport11: a complete reannotation of the Arabidopsis thaliana reference genome.</title>
        <authorList>
            <person name="Cheng C.Y."/>
            <person name="Krishnakumar V."/>
            <person name="Chan A.P."/>
            <person name="Thibaud-Nissen F."/>
            <person name="Schobel S."/>
            <person name="Town C.D."/>
        </authorList>
    </citation>
    <scope>GENOME REANNOTATION</scope>
    <source>
        <strain>cv. Columbia</strain>
    </source>
</reference>
<reference key="3">
    <citation type="journal article" date="2003" name="Science">
        <title>Empirical analysis of transcriptional activity in the Arabidopsis genome.</title>
        <authorList>
            <person name="Yamada K."/>
            <person name="Lim J."/>
            <person name="Dale J.M."/>
            <person name="Chen H."/>
            <person name="Shinn P."/>
            <person name="Palm C.J."/>
            <person name="Southwick A.M."/>
            <person name="Wu H.C."/>
            <person name="Kim C.J."/>
            <person name="Nguyen M."/>
            <person name="Pham P.K."/>
            <person name="Cheuk R.F."/>
            <person name="Karlin-Newmann G."/>
            <person name="Liu S.X."/>
            <person name="Lam B."/>
            <person name="Sakano H."/>
            <person name="Wu T."/>
            <person name="Yu G."/>
            <person name="Miranda M."/>
            <person name="Quach H.L."/>
            <person name="Tripp M."/>
            <person name="Chang C.H."/>
            <person name="Lee J.M."/>
            <person name="Toriumi M.J."/>
            <person name="Chan M.M."/>
            <person name="Tang C.C."/>
            <person name="Onodera C.S."/>
            <person name="Deng J.M."/>
            <person name="Akiyama K."/>
            <person name="Ansari Y."/>
            <person name="Arakawa T."/>
            <person name="Banh J."/>
            <person name="Banno F."/>
            <person name="Bowser L."/>
            <person name="Brooks S.Y."/>
            <person name="Carninci P."/>
            <person name="Chao Q."/>
            <person name="Choy N."/>
            <person name="Enju A."/>
            <person name="Goldsmith A.D."/>
            <person name="Gurjal M."/>
            <person name="Hansen N.F."/>
            <person name="Hayashizaki Y."/>
            <person name="Johnson-Hopson C."/>
            <person name="Hsuan V.W."/>
            <person name="Iida K."/>
            <person name="Karnes M."/>
            <person name="Khan S."/>
            <person name="Koesema E."/>
            <person name="Ishida J."/>
            <person name="Jiang P.X."/>
            <person name="Jones T."/>
            <person name="Kawai J."/>
            <person name="Kamiya A."/>
            <person name="Meyers C."/>
            <person name="Nakajima M."/>
            <person name="Narusaka M."/>
            <person name="Seki M."/>
            <person name="Sakurai T."/>
            <person name="Satou M."/>
            <person name="Tamse R."/>
            <person name="Vaysberg M."/>
            <person name="Wallender E.K."/>
            <person name="Wong C."/>
            <person name="Yamamura Y."/>
            <person name="Yuan S."/>
            <person name="Shinozaki K."/>
            <person name="Davis R.W."/>
            <person name="Theologis A."/>
            <person name="Ecker J.R."/>
        </authorList>
    </citation>
    <scope>NUCLEOTIDE SEQUENCE [LARGE SCALE MRNA] OF 149-1047 AND 154-1047</scope>
    <source>
        <strain>cv. Columbia</strain>
    </source>
</reference>
<reference key="4">
    <citation type="journal article" date="2007" name="J. Plant Physiol.">
        <title>Phylogenetic and expression analysis of sucrose phosphate synthase isozymes in plants.</title>
        <authorList>
            <person name="Lutfiyya L.L."/>
            <person name="Xu N."/>
            <person name="D'Ordine R.L."/>
            <person name="Morrell J.A."/>
            <person name="Miller P.W."/>
            <person name="Duff S.M."/>
        </authorList>
    </citation>
    <scope>GENE FAMILY</scope>
</reference>
<reference key="5">
    <citation type="journal article" date="2008" name="Plant Cell Physiol.">
        <title>Identification of kaonashi mutants showing abnormal pollen exine structure in Arabidopsis thaliana.</title>
        <authorList>
            <person name="Suzuki T."/>
            <person name="Masaoka K."/>
            <person name="Nishi M."/>
            <person name="Nakamura K."/>
            <person name="Ishiguro S."/>
        </authorList>
    </citation>
    <scope>FUNCTION</scope>
    <scope>TISSUE SPECIFICITY</scope>
    <scope>MUTAGENESIS OF PRO-596</scope>
    <source>
        <strain>cv. Landsberg erecta</strain>
    </source>
</reference>
<reference key="6">
    <citation type="journal article" date="2009" name="J. Proteomics">
        <title>Phosphoproteomic analysis of nuclei-enriched fractions from Arabidopsis thaliana.</title>
        <authorList>
            <person name="Jones A.M.E."/>
            <person name="MacLean D."/>
            <person name="Studholme D.J."/>
            <person name="Serna-Sanz A."/>
            <person name="Andreasson E."/>
            <person name="Rathjen J.P."/>
            <person name="Peck S.C."/>
        </authorList>
    </citation>
    <scope>IDENTIFICATION BY MASS SPECTROMETRY [LARGE SCALE ANALYSIS]</scope>
    <source>
        <strain>cv. Columbia</strain>
    </source>
</reference>
<reference key="7">
    <citation type="journal article" date="2014" name="Nature">
        <title>Nectar secretion requires sucrose phosphate synthases and the sugar transporter SWEET9.</title>
        <authorList>
            <person name="Lin I.W."/>
            <person name="Sosso D."/>
            <person name="Chen L.-Q."/>
            <person name="Gase K."/>
            <person name="Kim S.-G."/>
            <person name="Kessler D."/>
            <person name="Klinkenberg P.M."/>
            <person name="Gorder M.K."/>
            <person name="Hou B.-H."/>
            <person name="Qu X.-Q."/>
            <person name="Carter C.J."/>
            <person name="Baldwin I.T."/>
            <person name="Frommer W.B."/>
        </authorList>
    </citation>
    <scope>FUNCTION</scope>
    <scope>DISRUPTION PHENOTYPE</scope>
    <scope>TISSUE SPECIFICITY</scope>
</reference>
<organism>
    <name type="scientific">Arabidopsis thaliana</name>
    <name type="common">Mouse-ear cress</name>
    <dbReference type="NCBI Taxonomy" id="3702"/>
    <lineage>
        <taxon>Eukaryota</taxon>
        <taxon>Viridiplantae</taxon>
        <taxon>Streptophyta</taxon>
        <taxon>Embryophyta</taxon>
        <taxon>Tracheophyta</taxon>
        <taxon>Spermatophyta</taxon>
        <taxon>Magnoliopsida</taxon>
        <taxon>eudicotyledons</taxon>
        <taxon>Gunneridae</taxon>
        <taxon>Pentapetalae</taxon>
        <taxon>rosids</taxon>
        <taxon>malvids</taxon>
        <taxon>Brassicales</taxon>
        <taxon>Brassicaceae</taxon>
        <taxon>Camelineae</taxon>
        <taxon>Arabidopsis</taxon>
    </lineage>
</organism>
<proteinExistence type="evidence at protein level"/>
<accession>Q9FY54</accession>
<accession>Q8VYW8</accession>
<dbReference type="EC" id="2.4.1.14"/>
<dbReference type="EMBL" id="AL391222">
    <property type="protein sequence ID" value="CAC03459.1"/>
    <property type="molecule type" value="Genomic_DNA"/>
</dbReference>
<dbReference type="EMBL" id="CP002688">
    <property type="protein sequence ID" value="AED91636.1"/>
    <property type="molecule type" value="Genomic_DNA"/>
</dbReference>
<dbReference type="EMBL" id="AY069868">
    <property type="protein sequence ID" value="AAL47425.1"/>
    <property type="status" value="ALT_INIT"/>
    <property type="molecule type" value="mRNA"/>
</dbReference>
<dbReference type="EMBL" id="BT002697">
    <property type="protein sequence ID" value="AAO11613.1"/>
    <property type="molecule type" value="mRNA"/>
</dbReference>
<dbReference type="PIR" id="T51800">
    <property type="entry name" value="T51800"/>
</dbReference>
<dbReference type="RefSeq" id="NP_196672.3">
    <property type="nucleotide sequence ID" value="NM_121149.4"/>
</dbReference>
<dbReference type="SMR" id="Q9FY54"/>
<dbReference type="FunCoup" id="Q9FY54">
    <property type="interactions" value="170"/>
</dbReference>
<dbReference type="STRING" id="3702.Q9FY54"/>
<dbReference type="CAZy" id="GT4">
    <property type="family name" value="Glycosyltransferase Family 4"/>
</dbReference>
<dbReference type="GlyGen" id="Q9FY54">
    <property type="glycosylation" value="1 site"/>
</dbReference>
<dbReference type="iPTMnet" id="Q9FY54"/>
<dbReference type="SwissPalm" id="Q9FY54"/>
<dbReference type="PaxDb" id="3702-AT5G11110.1"/>
<dbReference type="ProteomicsDB" id="232574"/>
<dbReference type="EnsemblPlants" id="AT5G11110.1">
    <property type="protein sequence ID" value="AT5G11110.1"/>
    <property type="gene ID" value="AT5G11110"/>
</dbReference>
<dbReference type="GeneID" id="830979"/>
<dbReference type="Gramene" id="AT5G11110.1">
    <property type="protein sequence ID" value="AT5G11110.1"/>
    <property type="gene ID" value="AT5G11110"/>
</dbReference>
<dbReference type="KEGG" id="ath:AT5G11110"/>
<dbReference type="Araport" id="AT5G11110"/>
<dbReference type="TAIR" id="AT5G11110">
    <property type="gene designation" value="SPS2F"/>
</dbReference>
<dbReference type="eggNOG" id="KOG0853">
    <property type="taxonomic scope" value="Eukaryota"/>
</dbReference>
<dbReference type="HOGENOM" id="CLU_009583_24_0_1"/>
<dbReference type="InParanoid" id="Q9FY54"/>
<dbReference type="OMA" id="KWQRVEF"/>
<dbReference type="PhylomeDB" id="Q9FY54"/>
<dbReference type="BRENDA" id="2.4.1.14">
    <property type="organism ID" value="399"/>
</dbReference>
<dbReference type="UniPathway" id="UPA00371">
    <property type="reaction ID" value="UER00545"/>
</dbReference>
<dbReference type="PRO" id="PR:Q9FY54"/>
<dbReference type="Proteomes" id="UP000006548">
    <property type="component" value="Chromosome 5"/>
</dbReference>
<dbReference type="ExpressionAtlas" id="Q9FY54">
    <property type="expression patterns" value="baseline and differential"/>
</dbReference>
<dbReference type="GO" id="GO:0046524">
    <property type="term" value="F:sucrose-phosphate synthase activity"/>
    <property type="evidence" value="ECO:0000314"/>
    <property type="project" value="TAIR"/>
</dbReference>
<dbReference type="GO" id="GO:0071836">
    <property type="term" value="P:nectar secretion"/>
    <property type="evidence" value="ECO:0000315"/>
    <property type="project" value="UniProtKB"/>
</dbReference>
<dbReference type="GO" id="GO:0010208">
    <property type="term" value="P:pollen wall assembly"/>
    <property type="evidence" value="ECO:0000315"/>
    <property type="project" value="UniProtKB"/>
</dbReference>
<dbReference type="GO" id="GO:0005986">
    <property type="term" value="P:sucrose biosynthetic process"/>
    <property type="evidence" value="ECO:0000316"/>
    <property type="project" value="TAIR"/>
</dbReference>
<dbReference type="CDD" id="cd16419">
    <property type="entry name" value="HAD_SPS"/>
    <property type="match status" value="1"/>
</dbReference>
<dbReference type="FunFam" id="3.40.50.2000:FF:000112">
    <property type="entry name" value="Sucrose-phosphate synthase 1"/>
    <property type="match status" value="1"/>
</dbReference>
<dbReference type="Gene3D" id="3.40.50.2000">
    <property type="entry name" value="Glycogen Phosphorylase B"/>
    <property type="match status" value="2"/>
</dbReference>
<dbReference type="InterPro" id="IPR001296">
    <property type="entry name" value="Glyco_trans_1"/>
</dbReference>
<dbReference type="InterPro" id="IPR036412">
    <property type="entry name" value="HAD-like_sf"/>
</dbReference>
<dbReference type="InterPro" id="IPR006380">
    <property type="entry name" value="SPP-like_dom"/>
</dbReference>
<dbReference type="InterPro" id="IPR044161">
    <property type="entry name" value="SPS"/>
</dbReference>
<dbReference type="InterPro" id="IPR035659">
    <property type="entry name" value="SPS_C"/>
</dbReference>
<dbReference type="InterPro" id="IPR012819">
    <property type="entry name" value="SPS_pln"/>
</dbReference>
<dbReference type="InterPro" id="IPR000368">
    <property type="entry name" value="Sucrose_synth_GT-B1"/>
</dbReference>
<dbReference type="NCBIfam" id="TIGR02468">
    <property type="entry name" value="sucrsPsyn_pln"/>
    <property type="match status" value="1"/>
</dbReference>
<dbReference type="PANTHER" id="PTHR46039:SF7">
    <property type="entry name" value="SUCROSE-PHOSPHATE SYNTHASE 2-RELATED"/>
    <property type="match status" value="1"/>
</dbReference>
<dbReference type="PANTHER" id="PTHR46039">
    <property type="entry name" value="SUCROSE-PHOSPHATE SYNTHASE 3-RELATED"/>
    <property type="match status" value="1"/>
</dbReference>
<dbReference type="Pfam" id="PF00534">
    <property type="entry name" value="Glycos_transf_1"/>
    <property type="match status" value="1"/>
</dbReference>
<dbReference type="Pfam" id="PF00862">
    <property type="entry name" value="GT-B_Sucrose_synth"/>
    <property type="match status" value="1"/>
</dbReference>
<dbReference type="Pfam" id="PF05116">
    <property type="entry name" value="S6PP"/>
    <property type="match status" value="1"/>
</dbReference>
<dbReference type="SUPFAM" id="SSF56784">
    <property type="entry name" value="HAD-like"/>
    <property type="match status" value="1"/>
</dbReference>
<dbReference type="SUPFAM" id="SSF53756">
    <property type="entry name" value="UDP-Glycosyltransferase/glycogen phosphorylase"/>
    <property type="match status" value="1"/>
</dbReference>
<protein>
    <recommendedName>
        <fullName>Probable sucrose-phosphate synthase 2</fullName>
        <ecNumber>2.4.1.14</ecNumber>
    </recommendedName>
    <alternativeName>
        <fullName>Protein KAONASHI 2</fullName>
    </alternativeName>
    <alternativeName>
        <fullName>Sucrose-phosphate synthase 2F</fullName>
        <shortName>AtSPS2F</shortName>
    </alternativeName>
    <alternativeName>
        <fullName>Sucrose-phosphate synthase 5.2</fullName>
        <shortName>AtSPS5.2</shortName>
    </alternativeName>
    <alternativeName>
        <fullName>UDP-glucose-fructose-phosphate glucosyltransferase</fullName>
    </alternativeName>
</protein>
<name>SPSA2_ARATH</name>
<comment type="function">
    <text evidence="4 5">Plays a role in photosynthetic sucrose synthesis by catalyzing the rate-limiting step of sucrose biosynthesis from UDP-glucose and fructose- 6-phosphate. Involved in the regulation of carbon partitioning in the leaves of plants. May regulate the synthesis of sucrose and therefore play a major role as a limiting factor in the export of photoassimilates out of the leaf. Plays a role for sucrose availability that is essential for plant growth and fiber elongation. Required for nectar secretion.</text>
</comment>
<comment type="catalytic activity">
    <reaction>
        <text>beta-D-fructose 6-phosphate + UDP-alpha-D-glucose = sucrose 6(F)-phosphate + UDP + H(+)</text>
        <dbReference type="Rhea" id="RHEA:22172"/>
        <dbReference type="ChEBI" id="CHEBI:15378"/>
        <dbReference type="ChEBI" id="CHEBI:57634"/>
        <dbReference type="ChEBI" id="CHEBI:57723"/>
        <dbReference type="ChEBI" id="CHEBI:58223"/>
        <dbReference type="ChEBI" id="CHEBI:58885"/>
        <dbReference type="EC" id="2.4.1.14"/>
    </reaction>
</comment>
<comment type="activity regulation">
    <text evidence="1">Activity is regulated by phosphorylation and moderated by concentration of metabolites and light.</text>
</comment>
<comment type="pathway">
    <text>Glycan biosynthesis; sucrose biosynthesis; sucrose from D-fructose 6-phosphate and UDP-alpha-D-glucose: step 1/2.</text>
</comment>
<comment type="subunit">
    <text evidence="1">Homodimer or homotetramer.</text>
</comment>
<comment type="tissue specificity">
    <text evidence="4 5">Expressed in roots, cauline leaves, flower buds, flowers and anthers. Highly expressed in maturing nectaries.</text>
</comment>
<comment type="disruption phenotype">
    <text evidence="5">Loss of nectar secretion accompanied by starch accumulation in nectaries.</text>
</comment>
<comment type="similarity">
    <text evidence="6">Belongs to the glycosyltransferase 1 family.</text>
</comment>
<comment type="sequence caution" evidence="6">
    <conflict type="erroneous initiation">
        <sequence resource="EMBL-CDS" id="AAL47425"/>
    </conflict>
    <text>Truncated N-terminus.</text>
</comment>
<keyword id="KW-0328">Glycosyltransferase</keyword>
<keyword id="KW-0597">Phosphoprotein</keyword>
<keyword id="KW-1185">Reference proteome</keyword>
<keyword id="KW-0808">Transferase</keyword>
<gene>
    <name type="primary">SPS2</name>
    <name type="synonym">KNS2</name>
    <name type="synonym">SPS1</name>
    <name type="synonym">SPSA2</name>
    <name type="ordered locus">At5g11110</name>
    <name type="ORF">T5K6.100</name>
</gene>